<protein>
    <recommendedName>
        <fullName>Uncharacterized protein XkzB</fullName>
    </recommendedName>
</protein>
<proteinExistence type="predicted"/>
<organism>
    <name type="scientific">Bacillus subtilis (strain 168)</name>
    <dbReference type="NCBI Taxonomy" id="224308"/>
    <lineage>
        <taxon>Bacteria</taxon>
        <taxon>Bacillati</taxon>
        <taxon>Bacillota</taxon>
        <taxon>Bacilli</taxon>
        <taxon>Bacillales</taxon>
        <taxon>Bacillaceae</taxon>
        <taxon>Bacillus</taxon>
    </lineage>
</organism>
<keyword id="KW-1185">Reference proteome</keyword>
<accession>C0H3Z8</accession>
<reference key="1">
    <citation type="journal article" date="1997" name="Nature">
        <title>The complete genome sequence of the Gram-positive bacterium Bacillus subtilis.</title>
        <authorList>
            <person name="Kunst F."/>
            <person name="Ogasawara N."/>
            <person name="Moszer I."/>
            <person name="Albertini A.M."/>
            <person name="Alloni G."/>
            <person name="Azevedo V."/>
            <person name="Bertero M.G."/>
            <person name="Bessieres P."/>
            <person name="Bolotin A."/>
            <person name="Borchert S."/>
            <person name="Borriss R."/>
            <person name="Boursier L."/>
            <person name="Brans A."/>
            <person name="Braun M."/>
            <person name="Brignell S.C."/>
            <person name="Bron S."/>
            <person name="Brouillet S."/>
            <person name="Bruschi C.V."/>
            <person name="Caldwell B."/>
            <person name="Capuano V."/>
            <person name="Carter N.M."/>
            <person name="Choi S.-K."/>
            <person name="Codani J.-J."/>
            <person name="Connerton I.F."/>
            <person name="Cummings N.J."/>
            <person name="Daniel R.A."/>
            <person name="Denizot F."/>
            <person name="Devine K.M."/>
            <person name="Duesterhoeft A."/>
            <person name="Ehrlich S.D."/>
            <person name="Emmerson P.T."/>
            <person name="Entian K.-D."/>
            <person name="Errington J."/>
            <person name="Fabret C."/>
            <person name="Ferrari E."/>
            <person name="Foulger D."/>
            <person name="Fritz C."/>
            <person name="Fujita M."/>
            <person name="Fujita Y."/>
            <person name="Fuma S."/>
            <person name="Galizzi A."/>
            <person name="Galleron N."/>
            <person name="Ghim S.-Y."/>
            <person name="Glaser P."/>
            <person name="Goffeau A."/>
            <person name="Golightly E.J."/>
            <person name="Grandi G."/>
            <person name="Guiseppi G."/>
            <person name="Guy B.J."/>
            <person name="Haga K."/>
            <person name="Haiech J."/>
            <person name="Harwood C.R."/>
            <person name="Henaut A."/>
            <person name="Hilbert H."/>
            <person name="Holsappel S."/>
            <person name="Hosono S."/>
            <person name="Hullo M.-F."/>
            <person name="Itaya M."/>
            <person name="Jones L.-M."/>
            <person name="Joris B."/>
            <person name="Karamata D."/>
            <person name="Kasahara Y."/>
            <person name="Klaerr-Blanchard M."/>
            <person name="Klein C."/>
            <person name="Kobayashi Y."/>
            <person name="Koetter P."/>
            <person name="Koningstein G."/>
            <person name="Krogh S."/>
            <person name="Kumano M."/>
            <person name="Kurita K."/>
            <person name="Lapidus A."/>
            <person name="Lardinois S."/>
            <person name="Lauber J."/>
            <person name="Lazarevic V."/>
            <person name="Lee S.-M."/>
            <person name="Levine A."/>
            <person name="Liu H."/>
            <person name="Masuda S."/>
            <person name="Mauel C."/>
            <person name="Medigue C."/>
            <person name="Medina N."/>
            <person name="Mellado R.P."/>
            <person name="Mizuno M."/>
            <person name="Moestl D."/>
            <person name="Nakai S."/>
            <person name="Noback M."/>
            <person name="Noone D."/>
            <person name="O'Reilly M."/>
            <person name="Ogawa K."/>
            <person name="Ogiwara A."/>
            <person name="Oudega B."/>
            <person name="Park S.-H."/>
            <person name="Parro V."/>
            <person name="Pohl T.M."/>
            <person name="Portetelle D."/>
            <person name="Porwollik S."/>
            <person name="Prescott A.M."/>
            <person name="Presecan E."/>
            <person name="Pujic P."/>
            <person name="Purnelle B."/>
            <person name="Rapoport G."/>
            <person name="Rey M."/>
            <person name="Reynolds S."/>
            <person name="Rieger M."/>
            <person name="Rivolta C."/>
            <person name="Rocha E."/>
            <person name="Roche B."/>
            <person name="Rose M."/>
            <person name="Sadaie Y."/>
            <person name="Sato T."/>
            <person name="Scanlan E."/>
            <person name="Schleich S."/>
            <person name="Schroeter R."/>
            <person name="Scoffone F."/>
            <person name="Sekiguchi J."/>
            <person name="Sekowska A."/>
            <person name="Seror S.J."/>
            <person name="Serror P."/>
            <person name="Shin B.-S."/>
            <person name="Soldo B."/>
            <person name="Sorokin A."/>
            <person name="Tacconi E."/>
            <person name="Takagi T."/>
            <person name="Takahashi H."/>
            <person name="Takemaru K."/>
            <person name="Takeuchi M."/>
            <person name="Tamakoshi A."/>
            <person name="Tanaka T."/>
            <person name="Terpstra P."/>
            <person name="Tognoni A."/>
            <person name="Tosato V."/>
            <person name="Uchiyama S."/>
            <person name="Vandenbol M."/>
            <person name="Vannier F."/>
            <person name="Vassarotti A."/>
            <person name="Viari A."/>
            <person name="Wambutt R."/>
            <person name="Wedler E."/>
            <person name="Wedler H."/>
            <person name="Weitzenegger T."/>
            <person name="Winters P."/>
            <person name="Wipat A."/>
            <person name="Yamamoto H."/>
            <person name="Yamane K."/>
            <person name="Yasumoto K."/>
            <person name="Yata K."/>
            <person name="Yoshida K."/>
            <person name="Yoshikawa H.-F."/>
            <person name="Zumstein E."/>
            <person name="Yoshikawa H."/>
            <person name="Danchin A."/>
        </authorList>
    </citation>
    <scope>NUCLEOTIDE SEQUENCE [LARGE SCALE GENOMIC DNA]</scope>
    <source>
        <strain>168</strain>
    </source>
</reference>
<sequence length="49" mass="5772">MYYAMHELHYSPSQLLELYEAPKHFKALLFGLIGYKLDLLEKESRRGGN</sequence>
<name>XKZB_BACSU</name>
<feature type="chain" id="PRO_0000386656" description="Uncharacterized protein XkzB">
    <location>
        <begin position="1"/>
        <end position="49"/>
    </location>
</feature>
<dbReference type="EMBL" id="AL009126">
    <property type="protein sequence ID" value="CAX52605.1"/>
    <property type="molecule type" value="Genomic_DNA"/>
</dbReference>
<dbReference type="RefSeq" id="WP_003239113.1">
    <property type="nucleotide sequence ID" value="NZ_OZ025638.1"/>
</dbReference>
<dbReference type="RefSeq" id="YP_003097715.1">
    <property type="nucleotide sequence ID" value="NC_000964.3"/>
</dbReference>
<dbReference type="SMR" id="C0H3Z8"/>
<dbReference type="FunCoup" id="C0H3Z8">
    <property type="interactions" value="34"/>
</dbReference>
<dbReference type="STRING" id="224308.BSU12672"/>
<dbReference type="PaxDb" id="224308-BSU12672"/>
<dbReference type="EnsemblBacteria" id="CAX52605">
    <property type="protein sequence ID" value="CAX52605"/>
    <property type="gene ID" value="BSU_12672"/>
</dbReference>
<dbReference type="GeneID" id="8303192"/>
<dbReference type="KEGG" id="bsu:BSU12672"/>
<dbReference type="InParanoid" id="C0H3Z8"/>
<dbReference type="OrthoDB" id="2893821at2"/>
<dbReference type="BioCyc" id="BSUB:BSU12672-MONOMER"/>
<dbReference type="Proteomes" id="UP000001570">
    <property type="component" value="Chromosome"/>
</dbReference>
<gene>
    <name type="primary">xkzB</name>
    <name type="ordered locus">BSU12672</name>
</gene>